<gene>
    <name evidence="20" type="primary">H2AZ1</name>
    <name evidence="20" type="synonym">H2AFZ</name>
    <name evidence="20" type="synonym">H2AZ</name>
</gene>
<dbReference type="EMBL" id="X52317">
    <property type="protein sequence ID" value="CAA36553.1"/>
    <property type="molecule type" value="mRNA"/>
</dbReference>
<dbReference type="EMBL" id="M37583">
    <property type="protein sequence ID" value="AAA35984.1"/>
    <property type="molecule type" value="mRNA"/>
</dbReference>
<dbReference type="EMBL" id="L10138">
    <property type="protein sequence ID" value="AAC61625.1"/>
    <property type="molecule type" value="Genomic_DNA"/>
</dbReference>
<dbReference type="EMBL" id="CR457415">
    <property type="protein sequence ID" value="CAG33696.1"/>
    <property type="molecule type" value="mRNA"/>
</dbReference>
<dbReference type="EMBL" id="AK315413">
    <property type="protein sequence ID" value="BAG37803.1"/>
    <property type="molecule type" value="mRNA"/>
</dbReference>
<dbReference type="EMBL" id="AC097460">
    <property type="protein sequence ID" value="AAY41013.1"/>
    <property type="molecule type" value="Genomic_DNA"/>
</dbReference>
<dbReference type="EMBL" id="CH471057">
    <property type="protein sequence ID" value="EAX06118.1"/>
    <property type="molecule type" value="Genomic_DNA"/>
</dbReference>
<dbReference type="EMBL" id="BC018002">
    <property type="protein sequence ID" value="AAH18002.1"/>
    <property type="molecule type" value="mRNA"/>
</dbReference>
<dbReference type="EMBL" id="BC020936">
    <property type="protein sequence ID" value="AAH20936.1"/>
    <property type="molecule type" value="mRNA"/>
</dbReference>
<dbReference type="EMBL" id="BC103743">
    <property type="protein sequence ID" value="AAI03744.1"/>
    <property type="molecule type" value="mRNA"/>
</dbReference>
<dbReference type="CCDS" id="CCDS3654.1"/>
<dbReference type="PIR" id="A35881">
    <property type="entry name" value="A35881"/>
</dbReference>
<dbReference type="RefSeq" id="NP_002097.1">
    <property type="nucleotide sequence ID" value="NM_002106.4"/>
</dbReference>
<dbReference type="PDB" id="1F66">
    <property type="method" value="X-ray"/>
    <property type="resolution" value="2.60 A"/>
    <property type="chains" value="C/G=1-128"/>
</dbReference>
<dbReference type="PDB" id="3WA9">
    <property type="method" value="X-ray"/>
    <property type="resolution" value="3.07 A"/>
    <property type="chains" value="C/G=1-128"/>
</dbReference>
<dbReference type="PDB" id="4CAY">
    <property type="method" value="X-ray"/>
    <property type="resolution" value="1.48 A"/>
    <property type="chains" value="A=19-128"/>
</dbReference>
<dbReference type="PDB" id="4NFT">
    <property type="method" value="X-ray"/>
    <property type="resolution" value="2.61 A"/>
    <property type="chains" value="A/B/C/D=16-114"/>
</dbReference>
<dbReference type="PDB" id="5B31">
    <property type="method" value="X-ray"/>
    <property type="resolution" value="2.20 A"/>
    <property type="chains" value="G=1-128"/>
</dbReference>
<dbReference type="PDB" id="5B32">
    <property type="method" value="X-ray"/>
    <property type="resolution" value="2.35 A"/>
    <property type="chains" value="G=1-128"/>
</dbReference>
<dbReference type="PDB" id="5B33">
    <property type="method" value="X-ray"/>
    <property type="resolution" value="2.92 A"/>
    <property type="chains" value="C/G=1-128"/>
</dbReference>
<dbReference type="PDB" id="5CHL">
    <property type="method" value="X-ray"/>
    <property type="resolution" value="1.89 A"/>
    <property type="chains" value="B=22-113"/>
</dbReference>
<dbReference type="PDB" id="5FUG">
    <property type="method" value="X-ray"/>
    <property type="resolution" value="2.70 A"/>
    <property type="chains" value="A/D/G/J=19-128"/>
</dbReference>
<dbReference type="PDB" id="5Z30">
    <property type="method" value="X-ray"/>
    <property type="resolution" value="2.45 A"/>
    <property type="chains" value="C/G=1-128"/>
</dbReference>
<dbReference type="PDB" id="6JOU">
    <property type="method" value="X-ray"/>
    <property type="resolution" value="2.17 A"/>
    <property type="chains" value="C/G=1-128"/>
</dbReference>
<dbReference type="PDB" id="6KO2">
    <property type="method" value="X-ray"/>
    <property type="resolution" value="1.50 A"/>
    <property type="chains" value="B=4-10"/>
</dbReference>
<dbReference type="PDB" id="7YRD">
    <property type="method" value="EM"/>
    <property type="resolution" value="3.20 A"/>
    <property type="chains" value="C/G=16-123"/>
</dbReference>
<dbReference type="PDB" id="7YRG">
    <property type="method" value="EM"/>
    <property type="resolution" value="4.20 A"/>
    <property type="chains" value="C/G=11-123"/>
</dbReference>
<dbReference type="PDB" id="8JHF">
    <property type="method" value="EM"/>
    <property type="resolution" value="3.68 A"/>
    <property type="chains" value="C/G=14-126"/>
</dbReference>
<dbReference type="PDB" id="8T9F">
    <property type="method" value="EM"/>
    <property type="resolution" value="2.60 A"/>
    <property type="chains" value="C/G=1-128"/>
</dbReference>
<dbReference type="PDB" id="8THU">
    <property type="method" value="EM"/>
    <property type="resolution" value="3.10 A"/>
    <property type="chains" value="C/G=1-128"/>
</dbReference>
<dbReference type="PDB" id="9C62">
    <property type="method" value="EM"/>
    <property type="resolution" value="5.28 A"/>
    <property type="chains" value="N=1-128"/>
</dbReference>
<dbReference type="PDBsum" id="1F66"/>
<dbReference type="PDBsum" id="3WA9"/>
<dbReference type="PDBsum" id="4CAY"/>
<dbReference type="PDBsum" id="4NFT"/>
<dbReference type="PDBsum" id="5B31"/>
<dbReference type="PDBsum" id="5B32"/>
<dbReference type="PDBsum" id="5B33"/>
<dbReference type="PDBsum" id="5CHL"/>
<dbReference type="PDBsum" id="5FUG"/>
<dbReference type="PDBsum" id="5Z30"/>
<dbReference type="PDBsum" id="6JOU"/>
<dbReference type="PDBsum" id="6KO2"/>
<dbReference type="PDBsum" id="7YRD"/>
<dbReference type="PDBsum" id="7YRG"/>
<dbReference type="PDBsum" id="8JHF"/>
<dbReference type="PDBsum" id="8T9F"/>
<dbReference type="PDBsum" id="8THU"/>
<dbReference type="PDBsum" id="9C62"/>
<dbReference type="EMDB" id="EMD-18794"/>
<dbReference type="EMDB" id="EMD-34053"/>
<dbReference type="EMDB" id="EMD-34055"/>
<dbReference type="EMDB" id="EMD-36264"/>
<dbReference type="EMDB" id="EMD-41109"/>
<dbReference type="EMDB" id="EMD-41113"/>
<dbReference type="EMDB" id="EMD-41272"/>
<dbReference type="EMDB" id="EMD-45240"/>
<dbReference type="SMR" id="P0C0S5"/>
<dbReference type="BioGRID" id="109269">
    <property type="interactions" value="384"/>
</dbReference>
<dbReference type="ComplexPortal" id="CPX-5670">
    <property type="entry name" value="Nucleosome, variant H3.1-H2A.Z-H2B.1"/>
</dbReference>
<dbReference type="CORUM" id="P0C0S5"/>
<dbReference type="DIP" id="DIP-38593N"/>
<dbReference type="FunCoup" id="P0C0S5">
    <property type="interactions" value="2357"/>
</dbReference>
<dbReference type="IntAct" id="P0C0S5">
    <property type="interactions" value="246"/>
</dbReference>
<dbReference type="MINT" id="P0C0S5"/>
<dbReference type="STRING" id="9606.ENSP00000296417"/>
<dbReference type="GlyCosmos" id="P0C0S5">
    <property type="glycosylation" value="1 site, 1 glycan"/>
</dbReference>
<dbReference type="GlyGen" id="P0C0S5">
    <property type="glycosylation" value="1 site, 1 O-linked glycan (1 site)"/>
</dbReference>
<dbReference type="iPTMnet" id="P0C0S5"/>
<dbReference type="PhosphoSitePlus" id="P0C0S5"/>
<dbReference type="SwissPalm" id="P0C0S5"/>
<dbReference type="BioMuta" id="H2AFZ"/>
<dbReference type="DMDM" id="83288408"/>
<dbReference type="jPOST" id="P0C0S5"/>
<dbReference type="MassIVE" id="P0C0S5"/>
<dbReference type="PaxDb" id="9606-ENSP00000296417"/>
<dbReference type="PeptideAtlas" id="P0C0S5"/>
<dbReference type="ProteomicsDB" id="52295"/>
<dbReference type="Pumba" id="P0C0S5"/>
<dbReference type="TopDownProteomics" id="P0C0S5"/>
<dbReference type="ABCD" id="P0C0S5">
    <property type="antibodies" value="1 sequenced antibody"/>
</dbReference>
<dbReference type="Antibodypedia" id="45022">
    <property type="antibodies" value="514 antibodies from 38 providers"/>
</dbReference>
<dbReference type="DNASU" id="3015"/>
<dbReference type="Ensembl" id="ENST00000296417.6">
    <property type="protein sequence ID" value="ENSP00000296417.5"/>
    <property type="gene ID" value="ENSG00000164032.12"/>
</dbReference>
<dbReference type="GeneID" id="3015"/>
<dbReference type="KEGG" id="hsa:3015"/>
<dbReference type="MANE-Select" id="ENST00000296417.6">
    <property type="protein sequence ID" value="ENSP00000296417.5"/>
    <property type="RefSeq nucleotide sequence ID" value="NM_002106.4"/>
    <property type="RefSeq protein sequence ID" value="NP_002097.1"/>
</dbReference>
<dbReference type="UCSC" id="uc003hvo.2">
    <property type="organism name" value="human"/>
</dbReference>
<dbReference type="AGR" id="HGNC:4741"/>
<dbReference type="CTD" id="3015"/>
<dbReference type="DisGeNET" id="3015"/>
<dbReference type="GeneCards" id="H2AZ1"/>
<dbReference type="HGNC" id="HGNC:4741">
    <property type="gene designation" value="H2AZ1"/>
</dbReference>
<dbReference type="HPA" id="ENSG00000164032">
    <property type="expression patterns" value="Tissue enhanced (bone)"/>
</dbReference>
<dbReference type="MIM" id="142763">
    <property type="type" value="gene"/>
</dbReference>
<dbReference type="neXtProt" id="NX_P0C0S5"/>
<dbReference type="OpenTargets" id="ENSG00000164032"/>
<dbReference type="VEuPathDB" id="HostDB:ENSG00000164032"/>
<dbReference type="eggNOG" id="KOG1757">
    <property type="taxonomic scope" value="Eukaryota"/>
</dbReference>
<dbReference type="GeneTree" id="ENSGT00900000140979"/>
<dbReference type="HOGENOM" id="CLU_062828_2_2_1"/>
<dbReference type="InParanoid" id="P0C0S5"/>
<dbReference type="OMA" id="PVGRIHT"/>
<dbReference type="OrthoDB" id="9529939at2759"/>
<dbReference type="PAN-GO" id="P0C0S5">
    <property type="GO annotations" value="1 GO annotation based on evolutionary models"/>
</dbReference>
<dbReference type="PhylomeDB" id="P0C0S5"/>
<dbReference type="TreeFam" id="TF354232"/>
<dbReference type="PathwayCommons" id="P0C0S5"/>
<dbReference type="Reactome" id="R-HSA-977225">
    <property type="pathway name" value="Amyloid fiber formation"/>
</dbReference>
<dbReference type="SignaLink" id="P0C0S5"/>
<dbReference type="SIGNOR" id="P0C0S5"/>
<dbReference type="BioGRID-ORCS" id="3015">
    <property type="hits" value="370 hits in 1122 CRISPR screens"/>
</dbReference>
<dbReference type="CD-CODE" id="91857CE7">
    <property type="entry name" value="Nucleolus"/>
</dbReference>
<dbReference type="ChiTaRS" id="H2AFZ">
    <property type="organism name" value="human"/>
</dbReference>
<dbReference type="EvolutionaryTrace" id="P0C0S5"/>
<dbReference type="GeneWiki" id="H2AFZ"/>
<dbReference type="GenomeRNAi" id="3015"/>
<dbReference type="Pharos" id="P0C0S5">
    <property type="development level" value="Tbio"/>
</dbReference>
<dbReference type="PRO" id="PR:P0C0S5"/>
<dbReference type="Proteomes" id="UP000005640">
    <property type="component" value="Chromosome 4"/>
</dbReference>
<dbReference type="RNAct" id="P0C0S5">
    <property type="molecule type" value="protein"/>
</dbReference>
<dbReference type="Bgee" id="ENSG00000164032">
    <property type="expression patterns" value="Expressed in ventricular zone and 209 other cell types or tissues"/>
</dbReference>
<dbReference type="ExpressionAtlas" id="P0C0S5">
    <property type="expression patterns" value="baseline and differential"/>
</dbReference>
<dbReference type="GO" id="GO:0000791">
    <property type="term" value="C:euchromatin"/>
    <property type="evidence" value="ECO:0000314"/>
    <property type="project" value="UniProtKB"/>
</dbReference>
<dbReference type="GO" id="GO:0070062">
    <property type="term" value="C:extracellular exosome"/>
    <property type="evidence" value="ECO:0007005"/>
    <property type="project" value="UniProtKB"/>
</dbReference>
<dbReference type="GO" id="GO:0000792">
    <property type="term" value="C:heterochromatin"/>
    <property type="evidence" value="ECO:0000314"/>
    <property type="project" value="UniProtKB"/>
</dbReference>
<dbReference type="GO" id="GO:0000786">
    <property type="term" value="C:nucleosome"/>
    <property type="evidence" value="ECO:0000353"/>
    <property type="project" value="ComplexPortal"/>
</dbReference>
<dbReference type="GO" id="GO:0005634">
    <property type="term" value="C:nucleus"/>
    <property type="evidence" value="ECO:0000314"/>
    <property type="project" value="UniProtKB"/>
</dbReference>
<dbReference type="GO" id="GO:0031490">
    <property type="term" value="F:chromatin DNA binding"/>
    <property type="evidence" value="ECO:0000314"/>
    <property type="project" value="UniProtKB"/>
</dbReference>
<dbReference type="GO" id="GO:0031492">
    <property type="term" value="F:nucleosomal DNA binding"/>
    <property type="evidence" value="ECO:0000314"/>
    <property type="project" value="UniProtKB"/>
</dbReference>
<dbReference type="GO" id="GO:0046982">
    <property type="term" value="F:protein heterodimerization activity"/>
    <property type="evidence" value="ECO:0007669"/>
    <property type="project" value="InterPro"/>
</dbReference>
<dbReference type="GO" id="GO:0000978">
    <property type="term" value="F:RNA polymerase II cis-regulatory region sequence-specific DNA binding"/>
    <property type="evidence" value="ECO:0000314"/>
    <property type="project" value="UniProtKB"/>
</dbReference>
<dbReference type="GO" id="GO:0000979">
    <property type="term" value="F:RNA polymerase II core promoter sequence-specific DNA binding"/>
    <property type="evidence" value="ECO:0000314"/>
    <property type="project" value="UniProtKB"/>
</dbReference>
<dbReference type="GO" id="GO:0030527">
    <property type="term" value="F:structural constituent of chromatin"/>
    <property type="evidence" value="ECO:0000318"/>
    <property type="project" value="GO_Central"/>
</dbReference>
<dbReference type="GO" id="GO:0071392">
    <property type="term" value="P:cellular response to estradiol stimulus"/>
    <property type="evidence" value="ECO:0000315"/>
    <property type="project" value="UniProtKB"/>
</dbReference>
<dbReference type="GO" id="GO:0006325">
    <property type="term" value="P:chromatin organization"/>
    <property type="evidence" value="ECO:0000303"/>
    <property type="project" value="ComplexPortal"/>
</dbReference>
<dbReference type="GO" id="GO:0031507">
    <property type="term" value="P:heterochromatin formation"/>
    <property type="evidence" value="ECO:0000318"/>
    <property type="project" value="GO_Central"/>
</dbReference>
<dbReference type="GO" id="GO:0045944">
    <property type="term" value="P:positive regulation of transcription by RNA polymerase II"/>
    <property type="evidence" value="ECO:0000315"/>
    <property type="project" value="UniProtKB"/>
</dbReference>
<dbReference type="CDD" id="cd00074">
    <property type="entry name" value="HFD_H2A"/>
    <property type="match status" value="1"/>
</dbReference>
<dbReference type="FunFam" id="1.10.20.10:FF:000005">
    <property type="entry name" value="Histone H2A"/>
    <property type="match status" value="1"/>
</dbReference>
<dbReference type="Gene3D" id="1.10.20.10">
    <property type="entry name" value="Histone, subunit A"/>
    <property type="match status" value="1"/>
</dbReference>
<dbReference type="IDEAL" id="IID00019"/>
<dbReference type="InterPro" id="IPR009072">
    <property type="entry name" value="Histone-fold"/>
</dbReference>
<dbReference type="InterPro" id="IPR002119">
    <property type="entry name" value="Histone_H2A"/>
</dbReference>
<dbReference type="InterPro" id="IPR007125">
    <property type="entry name" value="Histone_H2A/H2B/H3"/>
</dbReference>
<dbReference type="InterPro" id="IPR032454">
    <property type="entry name" value="Histone_H2A_C"/>
</dbReference>
<dbReference type="InterPro" id="IPR032458">
    <property type="entry name" value="Histone_H2A_CS"/>
</dbReference>
<dbReference type="PANTHER" id="PTHR23430">
    <property type="entry name" value="HISTONE H2A"/>
    <property type="match status" value="1"/>
</dbReference>
<dbReference type="Pfam" id="PF00125">
    <property type="entry name" value="Histone"/>
    <property type="match status" value="1"/>
</dbReference>
<dbReference type="Pfam" id="PF16211">
    <property type="entry name" value="Histone_H2A_C"/>
    <property type="match status" value="1"/>
</dbReference>
<dbReference type="PRINTS" id="PR00620">
    <property type="entry name" value="HISTONEH2A"/>
</dbReference>
<dbReference type="SMART" id="SM00414">
    <property type="entry name" value="H2A"/>
    <property type="match status" value="1"/>
</dbReference>
<dbReference type="SUPFAM" id="SSF47113">
    <property type="entry name" value="Histone-fold"/>
    <property type="match status" value="1"/>
</dbReference>
<dbReference type="PROSITE" id="PS00046">
    <property type="entry name" value="HISTONE_H2A"/>
    <property type="match status" value="1"/>
</dbReference>
<reference key="1">
    <citation type="journal article" date="1988" name="Nucleic Acids Res.">
        <title>Sequence of cDNAs for mammalian H2A.Z, an evolutionarily diverged but highly conserved basal histone H2A isoprotein species.</title>
        <authorList>
            <person name="Hatch C.L."/>
            <person name="Bonner W.M."/>
        </authorList>
    </citation>
    <scope>NUCLEOTIDE SEQUENCE [MRNA]</scope>
    <source>
        <tissue>Brain</tissue>
    </source>
</reference>
<reference key="2">
    <citation type="journal article" date="1990" name="J. Biol. Chem.">
        <title>The human histone H2A.Z gene. Sequence and regulation.</title>
        <authorList>
            <person name="Hatch C.L."/>
            <person name="Bonner W.M."/>
        </authorList>
    </citation>
    <scope>NUCLEOTIDE SEQUENCE [GENOMIC DNA]</scope>
</reference>
<reference key="3">
    <citation type="submission" date="2004-06" db="EMBL/GenBank/DDBJ databases">
        <title>Cloning of human full open reading frames in Gateway(TM) system entry vector (pDONR201).</title>
        <authorList>
            <person name="Ebert L."/>
            <person name="Schick M."/>
            <person name="Neubert P."/>
            <person name="Schatten R."/>
            <person name="Henze S."/>
            <person name="Korn B."/>
        </authorList>
    </citation>
    <scope>NUCLEOTIDE SEQUENCE [LARGE SCALE MRNA]</scope>
</reference>
<reference key="4">
    <citation type="journal article" date="2004" name="Nat. Genet.">
        <title>Complete sequencing and characterization of 21,243 full-length human cDNAs.</title>
        <authorList>
            <person name="Ota T."/>
            <person name="Suzuki Y."/>
            <person name="Nishikawa T."/>
            <person name="Otsuki T."/>
            <person name="Sugiyama T."/>
            <person name="Irie R."/>
            <person name="Wakamatsu A."/>
            <person name="Hayashi K."/>
            <person name="Sato H."/>
            <person name="Nagai K."/>
            <person name="Kimura K."/>
            <person name="Makita H."/>
            <person name="Sekine M."/>
            <person name="Obayashi M."/>
            <person name="Nishi T."/>
            <person name="Shibahara T."/>
            <person name="Tanaka T."/>
            <person name="Ishii S."/>
            <person name="Yamamoto J."/>
            <person name="Saito K."/>
            <person name="Kawai Y."/>
            <person name="Isono Y."/>
            <person name="Nakamura Y."/>
            <person name="Nagahari K."/>
            <person name="Murakami K."/>
            <person name="Yasuda T."/>
            <person name="Iwayanagi T."/>
            <person name="Wagatsuma M."/>
            <person name="Shiratori A."/>
            <person name="Sudo H."/>
            <person name="Hosoiri T."/>
            <person name="Kaku Y."/>
            <person name="Kodaira H."/>
            <person name="Kondo H."/>
            <person name="Sugawara M."/>
            <person name="Takahashi M."/>
            <person name="Kanda K."/>
            <person name="Yokoi T."/>
            <person name="Furuya T."/>
            <person name="Kikkawa E."/>
            <person name="Omura Y."/>
            <person name="Abe K."/>
            <person name="Kamihara K."/>
            <person name="Katsuta N."/>
            <person name="Sato K."/>
            <person name="Tanikawa M."/>
            <person name="Yamazaki M."/>
            <person name="Ninomiya K."/>
            <person name="Ishibashi T."/>
            <person name="Yamashita H."/>
            <person name="Murakawa K."/>
            <person name="Fujimori K."/>
            <person name="Tanai H."/>
            <person name="Kimata M."/>
            <person name="Watanabe M."/>
            <person name="Hiraoka S."/>
            <person name="Chiba Y."/>
            <person name="Ishida S."/>
            <person name="Ono Y."/>
            <person name="Takiguchi S."/>
            <person name="Watanabe S."/>
            <person name="Yosida M."/>
            <person name="Hotuta T."/>
            <person name="Kusano J."/>
            <person name="Kanehori K."/>
            <person name="Takahashi-Fujii A."/>
            <person name="Hara H."/>
            <person name="Tanase T.-O."/>
            <person name="Nomura Y."/>
            <person name="Togiya S."/>
            <person name="Komai F."/>
            <person name="Hara R."/>
            <person name="Takeuchi K."/>
            <person name="Arita M."/>
            <person name="Imose N."/>
            <person name="Musashino K."/>
            <person name="Yuuki H."/>
            <person name="Oshima A."/>
            <person name="Sasaki N."/>
            <person name="Aotsuka S."/>
            <person name="Yoshikawa Y."/>
            <person name="Matsunawa H."/>
            <person name="Ichihara T."/>
            <person name="Shiohata N."/>
            <person name="Sano S."/>
            <person name="Moriya S."/>
            <person name="Momiyama H."/>
            <person name="Satoh N."/>
            <person name="Takami S."/>
            <person name="Terashima Y."/>
            <person name="Suzuki O."/>
            <person name="Nakagawa S."/>
            <person name="Senoh A."/>
            <person name="Mizoguchi H."/>
            <person name="Goto Y."/>
            <person name="Shimizu F."/>
            <person name="Wakebe H."/>
            <person name="Hishigaki H."/>
            <person name="Watanabe T."/>
            <person name="Sugiyama A."/>
            <person name="Takemoto M."/>
            <person name="Kawakami B."/>
            <person name="Yamazaki M."/>
            <person name="Watanabe K."/>
            <person name="Kumagai A."/>
            <person name="Itakura S."/>
            <person name="Fukuzumi Y."/>
            <person name="Fujimori Y."/>
            <person name="Komiyama M."/>
            <person name="Tashiro H."/>
            <person name="Tanigami A."/>
            <person name="Fujiwara T."/>
            <person name="Ono T."/>
            <person name="Yamada K."/>
            <person name="Fujii Y."/>
            <person name="Ozaki K."/>
            <person name="Hirao M."/>
            <person name="Ohmori Y."/>
            <person name="Kawabata A."/>
            <person name="Hikiji T."/>
            <person name="Kobatake N."/>
            <person name="Inagaki H."/>
            <person name="Ikema Y."/>
            <person name="Okamoto S."/>
            <person name="Okitani R."/>
            <person name="Kawakami T."/>
            <person name="Noguchi S."/>
            <person name="Itoh T."/>
            <person name="Shigeta K."/>
            <person name="Senba T."/>
            <person name="Matsumura K."/>
            <person name="Nakajima Y."/>
            <person name="Mizuno T."/>
            <person name="Morinaga M."/>
            <person name="Sasaki M."/>
            <person name="Togashi T."/>
            <person name="Oyama M."/>
            <person name="Hata H."/>
            <person name="Watanabe M."/>
            <person name="Komatsu T."/>
            <person name="Mizushima-Sugano J."/>
            <person name="Satoh T."/>
            <person name="Shirai Y."/>
            <person name="Takahashi Y."/>
            <person name="Nakagawa K."/>
            <person name="Okumura K."/>
            <person name="Nagase T."/>
            <person name="Nomura N."/>
            <person name="Kikuchi H."/>
            <person name="Masuho Y."/>
            <person name="Yamashita R."/>
            <person name="Nakai K."/>
            <person name="Yada T."/>
            <person name="Nakamura Y."/>
            <person name="Ohara O."/>
            <person name="Isogai T."/>
            <person name="Sugano S."/>
        </authorList>
    </citation>
    <scope>NUCLEOTIDE SEQUENCE [LARGE SCALE MRNA]</scope>
    <source>
        <tissue>Tongue</tissue>
    </source>
</reference>
<reference key="5">
    <citation type="journal article" date="2005" name="Nature">
        <title>Generation and annotation of the DNA sequences of human chromosomes 2 and 4.</title>
        <authorList>
            <person name="Hillier L.W."/>
            <person name="Graves T.A."/>
            <person name="Fulton R.S."/>
            <person name="Fulton L.A."/>
            <person name="Pepin K.H."/>
            <person name="Minx P."/>
            <person name="Wagner-McPherson C."/>
            <person name="Layman D."/>
            <person name="Wylie K."/>
            <person name="Sekhon M."/>
            <person name="Becker M.C."/>
            <person name="Fewell G.A."/>
            <person name="Delehaunty K.D."/>
            <person name="Miner T.L."/>
            <person name="Nash W.E."/>
            <person name="Kremitzki C."/>
            <person name="Oddy L."/>
            <person name="Du H."/>
            <person name="Sun H."/>
            <person name="Bradshaw-Cordum H."/>
            <person name="Ali J."/>
            <person name="Carter J."/>
            <person name="Cordes M."/>
            <person name="Harris A."/>
            <person name="Isak A."/>
            <person name="van Brunt A."/>
            <person name="Nguyen C."/>
            <person name="Du F."/>
            <person name="Courtney L."/>
            <person name="Kalicki J."/>
            <person name="Ozersky P."/>
            <person name="Abbott S."/>
            <person name="Armstrong J."/>
            <person name="Belter E.A."/>
            <person name="Caruso L."/>
            <person name="Cedroni M."/>
            <person name="Cotton M."/>
            <person name="Davidson T."/>
            <person name="Desai A."/>
            <person name="Elliott G."/>
            <person name="Erb T."/>
            <person name="Fronick C."/>
            <person name="Gaige T."/>
            <person name="Haakenson W."/>
            <person name="Haglund K."/>
            <person name="Holmes A."/>
            <person name="Harkins R."/>
            <person name="Kim K."/>
            <person name="Kruchowski S.S."/>
            <person name="Strong C.M."/>
            <person name="Grewal N."/>
            <person name="Goyea E."/>
            <person name="Hou S."/>
            <person name="Levy A."/>
            <person name="Martinka S."/>
            <person name="Mead K."/>
            <person name="McLellan M.D."/>
            <person name="Meyer R."/>
            <person name="Randall-Maher J."/>
            <person name="Tomlinson C."/>
            <person name="Dauphin-Kohlberg S."/>
            <person name="Kozlowicz-Reilly A."/>
            <person name="Shah N."/>
            <person name="Swearengen-Shahid S."/>
            <person name="Snider J."/>
            <person name="Strong J.T."/>
            <person name="Thompson J."/>
            <person name="Yoakum M."/>
            <person name="Leonard S."/>
            <person name="Pearman C."/>
            <person name="Trani L."/>
            <person name="Radionenko M."/>
            <person name="Waligorski J.E."/>
            <person name="Wang C."/>
            <person name="Rock S.M."/>
            <person name="Tin-Wollam A.-M."/>
            <person name="Maupin R."/>
            <person name="Latreille P."/>
            <person name="Wendl M.C."/>
            <person name="Yang S.-P."/>
            <person name="Pohl C."/>
            <person name="Wallis J.W."/>
            <person name="Spieth J."/>
            <person name="Bieri T.A."/>
            <person name="Berkowicz N."/>
            <person name="Nelson J.O."/>
            <person name="Osborne J."/>
            <person name="Ding L."/>
            <person name="Meyer R."/>
            <person name="Sabo A."/>
            <person name="Shotland Y."/>
            <person name="Sinha P."/>
            <person name="Wohldmann P.E."/>
            <person name="Cook L.L."/>
            <person name="Hickenbotham M.T."/>
            <person name="Eldred J."/>
            <person name="Williams D."/>
            <person name="Jones T.A."/>
            <person name="She X."/>
            <person name="Ciccarelli F.D."/>
            <person name="Izaurralde E."/>
            <person name="Taylor J."/>
            <person name="Schmutz J."/>
            <person name="Myers R.M."/>
            <person name="Cox D.R."/>
            <person name="Huang X."/>
            <person name="McPherson J.D."/>
            <person name="Mardis E.R."/>
            <person name="Clifton S.W."/>
            <person name="Warren W.C."/>
            <person name="Chinwalla A.T."/>
            <person name="Eddy S.R."/>
            <person name="Marra M.A."/>
            <person name="Ovcharenko I."/>
            <person name="Furey T.S."/>
            <person name="Miller W."/>
            <person name="Eichler E.E."/>
            <person name="Bork P."/>
            <person name="Suyama M."/>
            <person name="Torrents D."/>
            <person name="Waterston R.H."/>
            <person name="Wilson R.K."/>
        </authorList>
    </citation>
    <scope>NUCLEOTIDE SEQUENCE [LARGE SCALE GENOMIC DNA]</scope>
</reference>
<reference key="6">
    <citation type="submission" date="2005-07" db="EMBL/GenBank/DDBJ databases">
        <authorList>
            <person name="Mural R.J."/>
            <person name="Istrail S."/>
            <person name="Sutton G.G."/>
            <person name="Florea L."/>
            <person name="Halpern A.L."/>
            <person name="Mobarry C.M."/>
            <person name="Lippert R."/>
            <person name="Walenz B."/>
            <person name="Shatkay H."/>
            <person name="Dew I."/>
            <person name="Miller J.R."/>
            <person name="Flanigan M.J."/>
            <person name="Edwards N.J."/>
            <person name="Bolanos R."/>
            <person name="Fasulo D."/>
            <person name="Halldorsson B.V."/>
            <person name="Hannenhalli S."/>
            <person name="Turner R."/>
            <person name="Yooseph S."/>
            <person name="Lu F."/>
            <person name="Nusskern D.R."/>
            <person name="Shue B.C."/>
            <person name="Zheng X.H."/>
            <person name="Zhong F."/>
            <person name="Delcher A.L."/>
            <person name="Huson D.H."/>
            <person name="Kravitz S.A."/>
            <person name="Mouchard L."/>
            <person name="Reinert K."/>
            <person name="Remington K.A."/>
            <person name="Clark A.G."/>
            <person name="Waterman M.S."/>
            <person name="Eichler E.E."/>
            <person name="Adams M.D."/>
            <person name="Hunkapiller M.W."/>
            <person name="Myers E.W."/>
            <person name="Venter J.C."/>
        </authorList>
    </citation>
    <scope>NUCLEOTIDE SEQUENCE [LARGE SCALE GENOMIC DNA]</scope>
</reference>
<reference key="7">
    <citation type="journal article" date="2004" name="Genome Res.">
        <title>The status, quality, and expansion of the NIH full-length cDNA project: the Mammalian Gene Collection (MGC).</title>
        <authorList>
            <consortium name="The MGC Project Team"/>
        </authorList>
    </citation>
    <scope>NUCLEOTIDE SEQUENCE [LARGE SCALE MRNA]</scope>
    <source>
        <tissue>Brain</tissue>
        <tissue>Skeletal muscle</tissue>
        <tissue>Uterus</tissue>
    </source>
</reference>
<reference key="8">
    <citation type="journal article" date="2002" name="Bioessays">
        <title>Histone ubiquitination: a tagging tail unfolds?</title>
        <authorList>
            <person name="Jason L.J.M."/>
            <person name="Moore S.C."/>
            <person name="Lewis J.D."/>
            <person name="Lindsey G."/>
            <person name="Ausio J."/>
        </authorList>
    </citation>
    <scope>UBIQUITINATION AT LYS-122</scope>
</reference>
<reference key="9">
    <citation type="journal article" date="2005" name="J. Biol. Chem.">
        <title>Transcription-induced chromatin remodeling at the c-myc gene involves the local exchange of histone H2A.Z.</title>
        <authorList>
            <person name="Farris S.D."/>
            <person name="Rubio E.D."/>
            <person name="Moon J.J."/>
            <person name="Gombert W.M."/>
            <person name="Nelson B.H."/>
            <person name="Krumm A."/>
        </authorList>
    </citation>
    <scope>FUNCTION</scope>
</reference>
<reference key="10">
    <citation type="journal article" date="2006" name="J. Proteome Res.">
        <title>Precise characterization of human histones in the H2A gene family by top down mass spectrometry.</title>
        <authorList>
            <person name="Boyne M.T. II"/>
            <person name="Pesavento J.J."/>
            <person name="Mizzen C.A."/>
            <person name="Kelleher N.L."/>
        </authorList>
    </citation>
    <scope>MASS SPECTROMETRY</scope>
</reference>
<reference key="11">
    <citation type="journal article" date="2006" name="Mol. Cell. Proteomics">
        <title>Quantitative proteomic analysis of post-translational modifications of human histones.</title>
        <authorList>
            <person name="Beck H.C."/>
            <person name="Nielsen E.C."/>
            <person name="Matthiesen R."/>
            <person name="Jensen L.H."/>
            <person name="Sehested M."/>
            <person name="Finn P."/>
            <person name="Grauslund M."/>
            <person name="Hansen A.M."/>
            <person name="Jensen O.N."/>
        </authorList>
    </citation>
    <scope>ACETYLATION AT LYS-5; LYS-8 AND LYS-12</scope>
    <scope>IDENTIFICATION BY MASS SPECTROMETRY</scope>
</reference>
<reference key="12">
    <citation type="journal article" date="2006" name="Mol. Cell. Proteomics">
        <title>Characterization of histones H2A and H2B variants and their post-translational modifications by mass spectrometry.</title>
        <authorList>
            <person name="Bonenfant D."/>
            <person name="Coulot M."/>
            <person name="Towbin H."/>
            <person name="Schindler P."/>
            <person name="van Oostrum J."/>
        </authorList>
    </citation>
    <scope>ACETYLATION [LARGE SCALE ANALYSIS] AT LYS-5 AND LYS-8</scope>
    <scope>IDENTIFICATION BY MASS SPECTROMETRY [LARGE SCALE ANALYSIS]</scope>
</reference>
<reference key="13">
    <citation type="journal article" date="2009" name="Science">
        <title>Lysine acetylation targets protein complexes and co-regulates major cellular functions.</title>
        <authorList>
            <person name="Choudhary C."/>
            <person name="Kumar C."/>
            <person name="Gnad F."/>
            <person name="Nielsen M.L."/>
            <person name="Rehman M."/>
            <person name="Walther T.C."/>
            <person name="Olsen J.V."/>
            <person name="Mann M."/>
        </authorList>
    </citation>
    <scope>ACETYLATION [LARGE SCALE ANALYSIS] AT LYS-8; LYS-12 AND LYS-14</scope>
    <scope>IDENTIFICATION BY MASS SPECTROMETRY [LARGE SCALE ANALYSIS]</scope>
</reference>
<reference key="14">
    <citation type="journal article" date="2010" name="EMBO J.">
        <title>Essential role of p18Hamlet/SRCAP-mediated histone H2A.Z chromatin incorporation in muscle differentiation.</title>
        <authorList>
            <person name="Cuadrado A."/>
            <person name="Corrado N."/>
            <person name="Perdiguero E."/>
            <person name="Lafarga V."/>
            <person name="Munoz-Canoves P."/>
            <person name="Nebreda A.R."/>
        </authorList>
    </citation>
    <scope>INTERACTION WITH ZNHIT1</scope>
</reference>
<reference key="15">
    <citation type="journal article" date="2015" name="Nat. Cell Biol.">
        <title>Local generation of fumarate promotes DNA repair through inhibition of histone H3 demethylation.</title>
        <authorList>
            <person name="Jiang Y."/>
            <person name="Qian X."/>
            <person name="Shen J."/>
            <person name="Wang Y."/>
            <person name="Li X."/>
            <person name="Liu R."/>
            <person name="Xia Y."/>
            <person name="Chen Q."/>
            <person name="Peng G."/>
            <person name="Lin S.Y."/>
            <person name="Lu Z."/>
        </authorList>
    </citation>
    <scope>INTERACTION WITH FH</scope>
</reference>
<reference key="16">
    <citation type="journal article" date="2017" name="EMBO J.">
        <title>Multivalent binding of PWWP2A to H2A.Z regulates mitosis and neural crest differentiation.</title>
        <authorList>
            <person name="Puenzeler S."/>
            <person name="Link S."/>
            <person name="Wagner G."/>
            <person name="Keilhauer E.C."/>
            <person name="Kronbeck N."/>
            <person name="Spitzer R.M."/>
            <person name="Leidescher S."/>
            <person name="Markaki Y."/>
            <person name="Mentele E."/>
            <person name="Regnard C."/>
            <person name="Schneider K."/>
            <person name="Takahashi D."/>
            <person name="Kusakabe M."/>
            <person name="Vardabasso C."/>
            <person name="Zink L.M."/>
            <person name="Straub T."/>
            <person name="Bernstein E."/>
            <person name="Harata M."/>
            <person name="Leonhardt H."/>
            <person name="Mann M."/>
            <person name="Rupp R.A."/>
            <person name="Hake S.B."/>
        </authorList>
    </citation>
    <scope>INTERACTION WITH PWWP2A</scope>
</reference>
<reference key="17">
    <citation type="journal article" date="2018" name="Nat. Commun.">
        <title>PWWP2A binds distinct chromatin moieties and interacts with an MTA1-specific core NuRD complex.</title>
        <authorList>
            <person name="Link S."/>
            <person name="Spitzer R.M.M."/>
            <person name="Sana M."/>
            <person name="Torrado M."/>
            <person name="Voelker-Albert M.C."/>
            <person name="Keilhauer E.C."/>
            <person name="Burgold T."/>
            <person name="Puenzeler S."/>
            <person name="Low J.K.K."/>
            <person name="Lindstroem I."/>
            <person name="Nist A."/>
            <person name="Regnard C."/>
            <person name="Stiewe T."/>
            <person name="Hendrich B."/>
            <person name="Imhof A."/>
            <person name="Mann M."/>
            <person name="Mackay J.P."/>
            <person name="Bartkuhn M."/>
            <person name="Hake S.B."/>
        </authorList>
    </citation>
    <scope>INTERACTION WITH PWWP2A</scope>
</reference>
<reference key="18">
    <citation type="journal article" date="2000" name="Nat. Struct. Biol.">
        <title>Crystal structure of a nucleosome core particle containing the variant histone H2A.Z.</title>
        <authorList>
            <person name="Suto R.K."/>
            <person name="Clarkson M.J."/>
            <person name="Tremethick D.J."/>
            <person name="Luger K."/>
        </authorList>
    </citation>
    <scope>X-RAY CRYSTALLOGRAPHY (2.6 ANGSTROMS) IN COMPLEX WITH THE NUCLEOSOME</scope>
</reference>
<reference key="19">
    <citation type="journal article" date="2014" name="Nature">
        <title>ANP32E is a histone chaperone that removes H2A.Z from chromatin.</title>
        <authorList>
            <person name="Obri A."/>
            <person name="Ouararhni K."/>
            <person name="Papin C."/>
            <person name="Diebold M.L."/>
            <person name="Padmanabhan K."/>
            <person name="Marek M."/>
            <person name="Stoll I."/>
            <person name="Roy L."/>
            <person name="Reilly P.T."/>
            <person name="Mak T.W."/>
            <person name="Dimitrov S."/>
            <person name="Romier C."/>
            <person name="Hamiche A."/>
        </authorList>
    </citation>
    <scope>X-RAY CRYSTALLOGRAPHY (1.48 ANGSTROMS) OF 19-128 IN COMPLEX WITH ANP32E AND HISTONE H2B</scope>
    <scope>INTERACTION WITH ANP32E</scope>
</reference>
<reference key="20">
    <citation type="journal article" date="2013" name="Epigenetics">
        <title>SETD6 monomethylates H2AZ on lysine 7 and is required for the maintenance of embryonic stem cell self-renewal.</title>
        <authorList>
            <person name="Binda O."/>
            <person name="Sevilla A."/>
            <person name="LeRoy G."/>
            <person name="Lemischka I.R."/>
            <person name="Garcia B.A."/>
            <person name="Richard S."/>
        </authorList>
    </citation>
    <scope>METHYLATION AT LYS-5 AND LYS-8</scope>
</reference>
<reference key="21">
    <citation type="journal article" date="2019" name="Nat. Chem. Biol.">
        <title>DNA repair complex licenses acetylation of H2A.Z.1 by KAT2A during transcription.</title>
        <authorList>
            <person name="Semer M."/>
            <person name="Bidon B."/>
            <person name="Larnicol A."/>
            <person name="Caliskan G."/>
            <person name="Catez P."/>
            <person name="Egly J.M."/>
            <person name="Coin F."/>
            <person name="Le May N."/>
        </authorList>
    </citation>
    <scope>ACETYLATION AT LYS-5; LYS-8; LYS-12 AND LYS-14</scope>
    <scope>MUTAGENESIS OF 5-LYS--LYS-14; 5-LYS--LYS-8 AND 12-LYS--LYS-14</scope>
</reference>
<reference key="22">
    <citation type="journal article" date="2016" name="Nat. Struct. Mol. Biol.">
        <title>Molecular basis and specificity of H2A.Z-H2B recognition and deposition by the histone chaperone YL1.</title>
        <authorList>
            <person name="Latrick C.M."/>
            <person name="Marek M."/>
            <person name="Ouararhni K."/>
            <person name="Papin C."/>
            <person name="Stoll I."/>
            <person name="Ignatyeva M."/>
            <person name="Obri A."/>
            <person name="Ennifar E."/>
            <person name="Dimitrov S."/>
            <person name="Romier C."/>
            <person name="Hamiche A."/>
        </authorList>
    </citation>
    <scope>X-RAY CRYSTALLOGRAPHY (2.70 ANGSTROMS) OF 19-128 IN COMPLEX WITH H2BC11 AND VPS72</scope>
    <scope>INTERACTION WITH H2BC11 AND VPS72</scope>
    <scope>MUTAGENESIS OF THR-83; GLY-93; ASP-98 AND ILE-101</scope>
</reference>
<reference key="23">
    <citation type="journal article" date="2019" name="Nature">
        <title>Metabolic regulation of gene expression by histone lactylation.</title>
        <authorList>
            <person name="Zhang D."/>
            <person name="Tang Z."/>
            <person name="Huang H."/>
            <person name="Zhou G."/>
            <person name="Cui C."/>
            <person name="Weng Y."/>
            <person name="Liu W."/>
            <person name="Kim S."/>
            <person name="Lee S."/>
            <person name="Perez-Neut M."/>
            <person name="Ding J."/>
            <person name="Czyz D."/>
            <person name="Hu R."/>
            <person name="Ye Z."/>
            <person name="He M."/>
            <person name="Zheng Y.G."/>
            <person name="Shuman H.A."/>
            <person name="Dai L."/>
            <person name="Ren B."/>
            <person name="Roeder R.G."/>
            <person name="Becker L."/>
            <person name="Zhao Y."/>
        </authorList>
    </citation>
    <scope>LACTYLATION AT LYS-12; LYS-14 AND LYS-116</scope>
</reference>
<sequence>MAGGKAGKDSGKAKTKAVSRSQRAGLQFPVGRIHRHLKSRTTSHGRVGATAAVYSAAILEYLTAEVLELAGNASKDLKVKRITPRHLQLAIRGDEELDSLIKATIAGGGVIPHIHKSLIGKKGQQKTV</sequence>
<protein>
    <recommendedName>
        <fullName>Histone H2A.Z</fullName>
        <shortName>H2A/z</shortName>
    </recommendedName>
</protein>
<keyword id="KW-0002">3D-structure</keyword>
<keyword id="KW-0007">Acetylation</keyword>
<keyword id="KW-0158">Chromosome</keyword>
<keyword id="KW-0238">DNA-binding</keyword>
<keyword id="KW-1017">Isopeptide bond</keyword>
<keyword id="KW-0488">Methylation</keyword>
<keyword id="KW-0544">Nucleosome core</keyword>
<keyword id="KW-0539">Nucleus</keyword>
<keyword id="KW-1267">Proteomics identification</keyword>
<keyword id="KW-1185">Reference proteome</keyword>
<keyword id="KW-0832">Ubl conjugation</keyword>
<comment type="function">
    <text evidence="7">Variant histone H2A which replaces conventional H2A in a subset of nucleosomes. Nucleosomes wrap and compact DNA into chromatin, limiting DNA accessibility to the cellular machineries which require DNA as a template. Histones thereby play a central role in transcription regulation, DNA repair, DNA replication and chromosomal stability. DNA accessibility is regulated via a complex set of post-translational modifications of histones, also called histone code, and nucleosome remodeling. May be involved in the formation of constitutive heterochromatin. May be required for chromosome segregation during cell division.</text>
</comment>
<comment type="subunit">
    <text evidence="3 5 10 12 13 14 15 16">The nucleosome is a histone octamer containing two molecules each of H2A, H2B, H3 and H4 assembled in one H3-H4 heterotetramer and two H2A-H2B heterodimers. The octamer wraps approximately 147 bp of DNA. H2A or its variant H2AZ1 forms a heterodimer with H2B. H2AZ1 interacts with INCENP (By similarity). Interacts (via M6 cassette) with ANP32E; leading to removal of H2A.Z/H2AZ1 from the nucleosome. Heterodimer H2BC11 and H2AZ1 interacts with VPS72 (via N-terminal domain) (PubMed:26974126). The interaction of HZAZ1 and VPS72 is enhanced by VPS72 phosphorylation which is promoted by ZNHIT1 (By similarity). Interacts with PWWP2A (PubMed:28645917, PubMed:30327463). Interacts with FH (when phosphorylated by PRKDC) (PubMed:26237645). Interacts with ZNHIT1; the interaction results in recruitment of H2AZ1 to the MYOG promoter region which is required for muscle-specific gene expression (PubMed:20473270).</text>
</comment>
<comment type="interaction">
    <interactant intactId="EBI-1199859">
        <id>P0C0S5</id>
    </interactant>
    <interactant intactId="EBI-640741">
        <id>P01023</id>
        <label>A2M</label>
    </interactant>
    <organismsDiffer>false</organismsDiffer>
    <experiments>3</experiments>
</comment>
<comment type="interaction">
    <interactant intactId="EBI-1199859">
        <id>P0C0S5</id>
    </interactant>
    <interactant intactId="EBI-769329">
        <id>Q9GZN1</id>
        <label>ACTR6</label>
    </interactant>
    <organismsDiffer>false</organismsDiffer>
    <experiments>6</experiments>
</comment>
<comment type="interaction">
    <interactant intactId="EBI-1199859">
        <id>P0C0S5</id>
    </interactant>
    <interactant intactId="EBI-10968534">
        <id>P50570-2</id>
        <label>DNM2</label>
    </interactant>
    <organismsDiffer>false</organismsDiffer>
    <experiments>3</experiments>
</comment>
<comment type="interaction">
    <interactant intactId="EBI-1199859">
        <id>P0C0S5</id>
    </interactant>
    <interactant intactId="EBI-1050358">
        <id>P07954</id>
        <label>FH</label>
    </interactant>
    <organismsDiffer>false</organismsDiffer>
    <experiments>5</experiments>
</comment>
<comment type="interaction">
    <interactant intactId="EBI-1199859">
        <id>P0C0S5</id>
    </interactant>
    <interactant intactId="EBI-1056125">
        <id>Q16778</id>
        <label>H2BC21</label>
    </interactant>
    <organismsDiffer>false</organismsDiffer>
    <experiments>3</experiments>
</comment>
<comment type="interaction">
    <interactant intactId="EBI-1199859">
        <id>P0C0S5</id>
    </interactant>
    <interactant intactId="EBI-4409942">
        <id>P58876</id>
        <label>H2BC5</label>
    </interactant>
    <organismsDiffer>false</organismsDiffer>
    <experiments>4</experiments>
</comment>
<comment type="interaction">
    <interactant intactId="EBI-1199859">
        <id>P0C0S5</id>
    </interactant>
    <interactant intactId="EBI-25847109">
        <id>O14656-2</id>
        <label>TOR1A</label>
    </interactant>
    <organismsDiffer>false</organismsDiffer>
    <experiments>3</experiments>
</comment>
<comment type="interaction">
    <interactant intactId="EBI-1199859">
        <id>P0C0S5</id>
    </interactant>
    <interactant intactId="EBI-347522">
        <id>O43257</id>
        <label>ZNHIT1</label>
    </interactant>
    <organismsDiffer>false</organismsDiffer>
    <experiments>9</experiments>
</comment>
<comment type="subcellular location">
    <subcellularLocation>
        <location>Nucleus</location>
    </subcellularLocation>
    <subcellularLocation>
        <location>Chromosome</location>
    </subcellularLocation>
</comment>
<comment type="PTM">
    <text evidence="6">Monoubiquitination of Lys-122 gives a specific tag for epigenetic transcriptional repression.</text>
</comment>
<comment type="PTM">
    <text evidence="3 17">Acetylated on Lys-5, Lys-8, Lys-12 and Lys-14 by KAT2A; KAT2A is recruited by the XPC complex in absence of DNA damage (PubMed:31527837). Acetylated on Lys-5, Lys-8 and Lys-12 during interphase; acetylation disappears at mitosis (By similarity). Acetylation by the NuA4 histone acetyltransferase complex is required for hematopoietic stem cell maintenance (By similarity).</text>
</comment>
<comment type="PTM">
    <text evidence="11">Monomethylated on Lys-5 and Lys-8 by SETD6. SETD6 predominantly methylates Lys-8, lys-5 being a possible secondary site.</text>
</comment>
<comment type="PTM">
    <text evidence="2">Not phosphorylated.</text>
</comment>
<comment type="PTM">
    <text evidence="18">Lactylated in macrophages by EP300/P300 by using lactoyl-CoA directly derived from endogenous or exogenous lactate, leading to stimulates gene transcription.</text>
</comment>
<comment type="mass spectrometry">
    <text>Monoisotopic, not modified.</text>
</comment>
<comment type="similarity">
    <text evidence="19">Belongs to the histone H2A family.</text>
</comment>
<name>H2AZ_HUMAN</name>
<proteinExistence type="evidence at protein level"/>
<feature type="initiator methionine" description="Removed" evidence="19">
    <location>
        <position position="1"/>
    </location>
</feature>
<feature type="chain" id="PRO_0000055297" description="Histone H2A.Z">
    <location>
        <begin position="2"/>
        <end position="128"/>
    </location>
</feature>
<feature type="region of interest" description="Disordered" evidence="4">
    <location>
        <begin position="1"/>
        <end position="25"/>
    </location>
</feature>
<feature type="region of interest" description="Required for interaction with INCENP" evidence="1">
    <location>
        <begin position="1"/>
        <end position="17"/>
    </location>
</feature>
<feature type="region of interest" description="M6 cassette">
    <location>
        <begin position="89"/>
        <end position="100"/>
    </location>
</feature>
<feature type="region of interest" description="Required for interaction with INCENP" evidence="1">
    <location>
        <begin position="93"/>
        <end position="103"/>
    </location>
</feature>
<feature type="region of interest" description="Required for interaction with PWWP2A" evidence="15">
    <location>
        <begin position="120"/>
        <end position="128"/>
    </location>
</feature>
<feature type="compositionally biased region" description="Basic and acidic residues" evidence="4">
    <location>
        <begin position="1"/>
        <end position="12"/>
    </location>
</feature>
<feature type="modified residue" description="N6-acetyllysine; alternate" evidence="9 17 21">
    <location>
        <position position="5"/>
    </location>
</feature>
<feature type="modified residue" description="N6-methyllysine; alternate" evidence="11">
    <location>
        <position position="5"/>
    </location>
</feature>
<feature type="modified residue" description="N6-acetyllysine; alternate" evidence="9 17 21 22">
    <location>
        <position position="8"/>
    </location>
</feature>
<feature type="modified residue" description="N6-methyllysine; alternate" evidence="11">
    <location>
        <position position="8"/>
    </location>
</feature>
<feature type="modified residue" description="N6-acetyllysine; alternate" evidence="9 17 22">
    <location>
        <position position="12"/>
    </location>
</feature>
<feature type="modified residue" description="N6-lactoyllysine; alternate" evidence="18">
    <location>
        <position position="12"/>
    </location>
</feature>
<feature type="modified residue" description="N6-acetyllysine; alternate" evidence="17 22">
    <location>
        <position position="14"/>
    </location>
</feature>
<feature type="modified residue" description="N6-lactoyllysine; alternate" evidence="18">
    <location>
        <position position="14"/>
    </location>
</feature>
<feature type="modified residue" description="N6-lactoyllysine" evidence="18">
    <location>
        <position position="116"/>
    </location>
</feature>
<feature type="cross-link" description="Glycyl lysine isopeptide (Lys-Gly) (interchain with G-Cter in ubiquitin)" evidence="6">
    <location>
        <position position="122"/>
    </location>
</feature>
<feature type="mutagenesis site" description="Decreased acetylation by KAT2A." evidence="17">
    <original>KAGKDSGKAK</original>
    <variation>AAGKDSGAAA</variation>
    <location>
        <begin position="5"/>
        <end position="14"/>
    </location>
</feature>
<feature type="mutagenesis site" description="Decreased acetylation by KAT2A." evidence="17">
    <original>KAGK</original>
    <variation>AAGA</variation>
    <location>
        <begin position="5"/>
        <end position="8"/>
    </location>
</feature>
<feature type="mutagenesis site" description="Decreased acetylation by KAT2A." evidence="17">
    <original>KAK</original>
    <variation>AAA</variation>
    <location>
        <begin position="12"/>
        <end position="14"/>
    </location>
</feature>
<feature type="mutagenesis site" description="Decreases interaction with VPS72. Almost abolishes interaction with VPS72; when associated with N-93. Abolishes interaction with VPS72; when associated with N-93 and IG-101." evidence="14">
    <original>T</original>
    <variation>I</variation>
    <location>
        <position position="83"/>
    </location>
</feature>
<feature type="mutagenesis site" description="Decreases interaction with VPS72. Almost abolishes interaction with VPS72; when associated with I-83. Abolishes interaction with VPS72; when associated with I-83 and IG-101." evidence="14">
    <original>G</original>
    <variation>N</variation>
    <location>
        <position position="93"/>
    </location>
</feature>
<feature type="mutagenesis site" description="No effect on interaction with VPS72." evidence="14">
    <original>D</original>
    <variation>N</variation>
    <location>
        <position position="98"/>
    </location>
</feature>
<feature type="mutagenesis site" description="Abolishes interaction with VPS72; when associated with I-83 and N-93." evidence="14">
    <original>I</original>
    <variation>IG</variation>
    <location>
        <position position="101"/>
    </location>
</feature>
<feature type="helix" evidence="23">
    <location>
        <begin position="20"/>
        <end position="23"/>
    </location>
</feature>
<feature type="helix" evidence="23">
    <location>
        <begin position="30"/>
        <end position="39"/>
    </location>
</feature>
<feature type="strand" evidence="25">
    <location>
        <begin position="40"/>
        <end position="42"/>
    </location>
</feature>
<feature type="strand" evidence="24">
    <location>
        <begin position="43"/>
        <end position="45"/>
    </location>
</feature>
<feature type="helix" evidence="23">
    <location>
        <begin position="49"/>
        <end position="76"/>
    </location>
</feature>
<feature type="strand" evidence="23">
    <location>
        <begin position="80"/>
        <end position="82"/>
    </location>
</feature>
<feature type="helix" evidence="23">
    <location>
        <begin position="84"/>
        <end position="92"/>
    </location>
</feature>
<feature type="helix" evidence="23">
    <location>
        <begin position="95"/>
        <end position="106"/>
    </location>
</feature>
<feature type="helix" evidence="26">
    <location>
        <begin position="116"/>
        <end position="118"/>
    </location>
</feature>
<accession>P0C0S5</accession>
<accession>B2RD56</accession>
<accession>P17317</accession>
<accession>Q6I9U0</accession>
<organism>
    <name type="scientific">Homo sapiens</name>
    <name type="common">Human</name>
    <dbReference type="NCBI Taxonomy" id="9606"/>
    <lineage>
        <taxon>Eukaryota</taxon>
        <taxon>Metazoa</taxon>
        <taxon>Chordata</taxon>
        <taxon>Craniata</taxon>
        <taxon>Vertebrata</taxon>
        <taxon>Euteleostomi</taxon>
        <taxon>Mammalia</taxon>
        <taxon>Eutheria</taxon>
        <taxon>Euarchontoglires</taxon>
        <taxon>Primates</taxon>
        <taxon>Haplorrhini</taxon>
        <taxon>Catarrhini</taxon>
        <taxon>Hominidae</taxon>
        <taxon>Homo</taxon>
    </lineage>
</organism>
<evidence type="ECO:0000250" key="1"/>
<evidence type="ECO:0000250" key="2">
    <source>
        <dbReference type="UniProtKB" id="P0C0S4"/>
    </source>
</evidence>
<evidence type="ECO:0000250" key="3">
    <source>
        <dbReference type="UniProtKB" id="P0C0S6"/>
    </source>
</evidence>
<evidence type="ECO:0000256" key="4">
    <source>
        <dbReference type="SAM" id="MobiDB-lite"/>
    </source>
</evidence>
<evidence type="ECO:0000269" key="5">
    <source>
    </source>
</evidence>
<evidence type="ECO:0000269" key="6">
    <source>
    </source>
</evidence>
<evidence type="ECO:0000269" key="7">
    <source>
    </source>
</evidence>
<evidence type="ECO:0000269" key="8">
    <source>
    </source>
</evidence>
<evidence type="ECO:0000269" key="9">
    <source>
    </source>
</evidence>
<evidence type="ECO:0000269" key="10">
    <source>
    </source>
</evidence>
<evidence type="ECO:0000269" key="11">
    <source>
    </source>
</evidence>
<evidence type="ECO:0000269" key="12">
    <source>
    </source>
</evidence>
<evidence type="ECO:0000269" key="13">
    <source>
    </source>
</evidence>
<evidence type="ECO:0000269" key="14">
    <source>
    </source>
</evidence>
<evidence type="ECO:0000269" key="15">
    <source>
    </source>
</evidence>
<evidence type="ECO:0000269" key="16">
    <source>
    </source>
</evidence>
<evidence type="ECO:0000269" key="17">
    <source>
    </source>
</evidence>
<evidence type="ECO:0000269" key="18">
    <source>
    </source>
</evidence>
<evidence type="ECO:0000305" key="19"/>
<evidence type="ECO:0000312" key="20">
    <source>
        <dbReference type="HGNC" id="HGNC:4741"/>
    </source>
</evidence>
<evidence type="ECO:0007744" key="21">
    <source>
    </source>
</evidence>
<evidence type="ECO:0007744" key="22">
    <source>
    </source>
</evidence>
<evidence type="ECO:0007829" key="23">
    <source>
        <dbReference type="PDB" id="4CAY"/>
    </source>
</evidence>
<evidence type="ECO:0007829" key="24">
    <source>
        <dbReference type="PDB" id="5CHL"/>
    </source>
</evidence>
<evidence type="ECO:0007829" key="25">
    <source>
        <dbReference type="PDB" id="5Z30"/>
    </source>
</evidence>
<evidence type="ECO:0007829" key="26">
    <source>
        <dbReference type="PDB" id="6JOU"/>
    </source>
</evidence>